<gene>
    <name type="primary">Krit1</name>
    <name type="synonym">Ccm1</name>
</gene>
<dbReference type="EMBL" id="AF310134">
    <property type="protein sequence ID" value="AAG47775.1"/>
    <property type="molecule type" value="mRNA"/>
</dbReference>
<dbReference type="EMBL" id="AF306509">
    <property type="protein sequence ID" value="AAG18456.1"/>
    <property type="molecule type" value="mRNA"/>
</dbReference>
<dbReference type="EMBL" id="AY328895">
    <property type="protein sequence ID" value="AAQ92980.1"/>
    <property type="molecule type" value="mRNA"/>
</dbReference>
<dbReference type="EMBL" id="AY464945">
    <property type="protein sequence ID" value="AAR24089.1"/>
    <property type="molecule type" value="mRNA"/>
</dbReference>
<dbReference type="EMBL" id="BC054819">
    <property type="protein sequence ID" value="AAH54819.1"/>
    <property type="molecule type" value="mRNA"/>
</dbReference>
<dbReference type="EMBL" id="AK041574">
    <property type="protein sequence ID" value="BAC30991.1"/>
    <property type="molecule type" value="mRNA"/>
</dbReference>
<dbReference type="CCDS" id="CCDS39002.1">
    <molecule id="Q6S5J6-1"/>
</dbReference>
<dbReference type="CCDS" id="CCDS51409.1">
    <molecule id="Q6S5J6-2"/>
</dbReference>
<dbReference type="RefSeq" id="NP_001164023.1">
    <molecule id="Q6S5J6-2"/>
    <property type="nucleotide sequence ID" value="NM_001170552.1"/>
</dbReference>
<dbReference type="RefSeq" id="NP_109600.2">
    <molecule id="Q6S5J6-1"/>
    <property type="nucleotide sequence ID" value="NM_030675.3"/>
</dbReference>
<dbReference type="RefSeq" id="XP_006503680.1">
    <molecule id="Q6S5J6-1"/>
    <property type="nucleotide sequence ID" value="XM_006503617.4"/>
</dbReference>
<dbReference type="RefSeq" id="XP_006503681.1">
    <molecule id="Q6S5J6-1"/>
    <property type="nucleotide sequence ID" value="XM_006503618.5"/>
</dbReference>
<dbReference type="RefSeq" id="XP_030110771.1">
    <molecule id="Q6S5J6-1"/>
    <property type="nucleotide sequence ID" value="XM_030254911.2"/>
</dbReference>
<dbReference type="RefSeq" id="XP_030110772.1">
    <molecule id="Q6S5J6-2"/>
    <property type="nucleotide sequence ID" value="XM_030254912.1"/>
</dbReference>
<dbReference type="SMR" id="Q6S5J6"/>
<dbReference type="BioGRID" id="219753">
    <property type="interactions" value="2"/>
</dbReference>
<dbReference type="ComplexPortal" id="CPX-4621">
    <property type="entry name" value="CCM complex"/>
</dbReference>
<dbReference type="CORUM" id="Q6S5J6"/>
<dbReference type="FunCoup" id="Q6S5J6">
    <property type="interactions" value="2907"/>
</dbReference>
<dbReference type="IntAct" id="Q6S5J6">
    <property type="interactions" value="1"/>
</dbReference>
<dbReference type="MINT" id="Q6S5J6"/>
<dbReference type="STRING" id="10090.ENSMUSP00000078985"/>
<dbReference type="GlyGen" id="Q6S5J6">
    <property type="glycosylation" value="1 site, 1 N-linked glycan (1 site)"/>
</dbReference>
<dbReference type="iPTMnet" id="Q6S5J6"/>
<dbReference type="PhosphoSitePlus" id="Q6S5J6"/>
<dbReference type="jPOST" id="Q6S5J6"/>
<dbReference type="PaxDb" id="10090-ENSMUSP00000078985"/>
<dbReference type="ProteomicsDB" id="264866">
    <molecule id="Q6S5J6-1"/>
</dbReference>
<dbReference type="ProteomicsDB" id="264867">
    <molecule id="Q6S5J6-2"/>
</dbReference>
<dbReference type="ProteomicsDB" id="264868">
    <molecule id="Q6S5J6-3"/>
</dbReference>
<dbReference type="ProteomicsDB" id="264869">
    <molecule id="Q6S5J6-4"/>
</dbReference>
<dbReference type="Pumba" id="Q6S5J6"/>
<dbReference type="DNASU" id="79264"/>
<dbReference type="Ensembl" id="ENSMUST00000080085.9">
    <molecule id="Q6S5J6-1"/>
    <property type="protein sequence ID" value="ENSMUSP00000078985.5"/>
    <property type="gene ID" value="ENSMUSG00000000600.16"/>
</dbReference>
<dbReference type="Ensembl" id="ENSMUST00000171023.8">
    <molecule id="Q6S5J6-2"/>
    <property type="protein sequence ID" value="ENSMUSP00000132375.2"/>
    <property type="gene ID" value="ENSMUSG00000000600.16"/>
</dbReference>
<dbReference type="Ensembl" id="ENSMUST00000200577.5">
    <molecule id="Q6S5J6-4"/>
    <property type="protein sequence ID" value="ENSMUSP00000143776.2"/>
    <property type="gene ID" value="ENSMUSG00000000600.16"/>
</dbReference>
<dbReference type="GeneID" id="79264"/>
<dbReference type="KEGG" id="mmu:79264"/>
<dbReference type="UCSC" id="uc008whs.2">
    <molecule id="Q6S5J6-1"/>
    <property type="organism name" value="mouse"/>
</dbReference>
<dbReference type="UCSC" id="uc008whv.2">
    <molecule id="Q6S5J6-2"/>
    <property type="organism name" value="mouse"/>
</dbReference>
<dbReference type="AGR" id="MGI:1930618"/>
<dbReference type="CTD" id="889"/>
<dbReference type="MGI" id="MGI:1930618">
    <property type="gene designation" value="Krit1"/>
</dbReference>
<dbReference type="VEuPathDB" id="HostDB:ENSMUSG00000000600"/>
<dbReference type="eggNOG" id="KOG4335">
    <property type="taxonomic scope" value="Eukaryota"/>
</dbReference>
<dbReference type="GeneTree" id="ENSGT00530000063721"/>
<dbReference type="HOGENOM" id="CLU_022188_0_0_1"/>
<dbReference type="InParanoid" id="Q6S5J6"/>
<dbReference type="OMA" id="WHGKVES"/>
<dbReference type="PhylomeDB" id="Q6S5J6"/>
<dbReference type="TreeFam" id="TF317921"/>
<dbReference type="BioGRID-ORCS" id="79264">
    <property type="hits" value="7 hits in 79 CRISPR screens"/>
</dbReference>
<dbReference type="CD-CODE" id="CE726F99">
    <property type="entry name" value="Postsynaptic density"/>
</dbReference>
<dbReference type="ChiTaRS" id="Krit1">
    <property type="organism name" value="mouse"/>
</dbReference>
<dbReference type="PRO" id="PR:Q6S5J6"/>
<dbReference type="Proteomes" id="UP000000589">
    <property type="component" value="Chromosome 5"/>
</dbReference>
<dbReference type="RNAct" id="Q6S5J6">
    <property type="molecule type" value="protein"/>
</dbReference>
<dbReference type="Bgee" id="ENSMUSG00000000600">
    <property type="expression patterns" value="Expressed in rostral migratory stream and 311 other cell types or tissues"/>
</dbReference>
<dbReference type="ExpressionAtlas" id="Q6S5J6">
    <property type="expression patterns" value="baseline and differential"/>
</dbReference>
<dbReference type="GO" id="GO:0005911">
    <property type="term" value="C:cell-cell junction"/>
    <property type="evidence" value="ECO:0000250"/>
    <property type="project" value="UniProtKB"/>
</dbReference>
<dbReference type="GO" id="GO:0005737">
    <property type="term" value="C:cytoplasm"/>
    <property type="evidence" value="ECO:0000314"/>
    <property type="project" value="MGI"/>
</dbReference>
<dbReference type="GO" id="GO:0005856">
    <property type="term" value="C:cytoskeleton"/>
    <property type="evidence" value="ECO:0007669"/>
    <property type="project" value="UniProtKB-SubCell"/>
</dbReference>
<dbReference type="GO" id="GO:0005886">
    <property type="term" value="C:plasma membrane"/>
    <property type="evidence" value="ECO:0000250"/>
    <property type="project" value="UniProtKB"/>
</dbReference>
<dbReference type="GO" id="GO:0032991">
    <property type="term" value="C:protein-containing complex"/>
    <property type="evidence" value="ECO:0000314"/>
    <property type="project" value="MGI"/>
</dbReference>
<dbReference type="GO" id="GO:0030695">
    <property type="term" value="F:GTPase regulator activity"/>
    <property type="evidence" value="ECO:0000304"/>
    <property type="project" value="MGI"/>
</dbReference>
<dbReference type="GO" id="GO:0008017">
    <property type="term" value="F:microtubule binding"/>
    <property type="evidence" value="ECO:0000250"/>
    <property type="project" value="UniProtKB"/>
</dbReference>
<dbReference type="GO" id="GO:0005546">
    <property type="term" value="F:phosphatidylinositol-4,5-bisphosphate binding"/>
    <property type="evidence" value="ECO:0000250"/>
    <property type="project" value="UniProtKB"/>
</dbReference>
<dbReference type="GO" id="GO:0001525">
    <property type="term" value="P:angiogenesis"/>
    <property type="evidence" value="ECO:0007669"/>
    <property type="project" value="UniProtKB-KW"/>
</dbReference>
<dbReference type="GO" id="GO:0045454">
    <property type="term" value="P:cell redox homeostasis"/>
    <property type="evidence" value="ECO:0000315"/>
    <property type="project" value="UniProtKB"/>
</dbReference>
<dbReference type="GO" id="GO:0003158">
    <property type="term" value="P:endothelium development"/>
    <property type="evidence" value="ECO:0000303"/>
    <property type="project" value="ComplexPortal"/>
</dbReference>
<dbReference type="GO" id="GO:0033622">
    <property type="term" value="P:integrin activation"/>
    <property type="evidence" value="ECO:0007669"/>
    <property type="project" value="Ensembl"/>
</dbReference>
<dbReference type="GO" id="GO:0016525">
    <property type="term" value="P:negative regulation of angiogenesis"/>
    <property type="evidence" value="ECO:0000315"/>
    <property type="project" value="UniProtKB"/>
</dbReference>
<dbReference type="GO" id="GO:2000352">
    <property type="term" value="P:negative regulation of endothelial cell apoptotic process"/>
    <property type="evidence" value="ECO:0000250"/>
    <property type="project" value="UniProtKB"/>
</dbReference>
<dbReference type="GO" id="GO:0010596">
    <property type="term" value="P:negative regulation of endothelial cell migration"/>
    <property type="evidence" value="ECO:0000250"/>
    <property type="project" value="UniProtKB"/>
</dbReference>
<dbReference type="GO" id="GO:0001937">
    <property type="term" value="P:negative regulation of endothelial cell proliferation"/>
    <property type="evidence" value="ECO:0000250"/>
    <property type="project" value="UniProtKB"/>
</dbReference>
<dbReference type="GO" id="GO:0045765">
    <property type="term" value="P:regulation of angiogenesis"/>
    <property type="evidence" value="ECO:0000303"/>
    <property type="project" value="ComplexPortal"/>
</dbReference>
<dbReference type="GO" id="GO:2000114">
    <property type="term" value="P:regulation of establishment of cell polarity"/>
    <property type="evidence" value="ECO:0000315"/>
    <property type="project" value="UniProtKB"/>
</dbReference>
<dbReference type="CDD" id="cd14473">
    <property type="entry name" value="FERM_B-lobe"/>
    <property type="match status" value="1"/>
</dbReference>
<dbReference type="CDD" id="cd13197">
    <property type="entry name" value="FERM_C_CCM1"/>
    <property type="match status" value="1"/>
</dbReference>
<dbReference type="FunFam" id="1.20.80.10:FF:000016">
    <property type="entry name" value="Krev interaction trapped protein 1"/>
    <property type="match status" value="1"/>
</dbReference>
<dbReference type="FunFam" id="3.30.70.2240:FF:000001">
    <property type="entry name" value="Krev interaction trapped protein 1"/>
    <property type="match status" value="1"/>
</dbReference>
<dbReference type="FunFam" id="3.30.70.2240:FF:000002">
    <property type="entry name" value="krev interaction trapped protein 1"/>
    <property type="match status" value="1"/>
</dbReference>
<dbReference type="FunFam" id="1.25.40.20:FF:000120">
    <property type="entry name" value="krev interaction trapped protein 1 isoform X1"/>
    <property type="match status" value="1"/>
</dbReference>
<dbReference type="FunFam" id="2.30.29.30:FF:000227">
    <property type="entry name" value="krev interaction trapped protein 1 isoform X1"/>
    <property type="match status" value="1"/>
</dbReference>
<dbReference type="Gene3D" id="1.20.80.10">
    <property type="match status" value="1"/>
</dbReference>
<dbReference type="Gene3D" id="1.25.40.20">
    <property type="entry name" value="Ankyrin repeat-containing domain"/>
    <property type="match status" value="1"/>
</dbReference>
<dbReference type="Gene3D" id="3.30.70.2240">
    <property type="entry name" value="KRIT, N-terminal Nudix domain, NPxY motif-rich region"/>
    <property type="match status" value="2"/>
</dbReference>
<dbReference type="Gene3D" id="3.10.20.90">
    <property type="entry name" value="Phosphatidylinositol 3-kinase Catalytic Subunit, Chain A, domain 1"/>
    <property type="match status" value="1"/>
</dbReference>
<dbReference type="Gene3D" id="2.30.29.30">
    <property type="entry name" value="Pleckstrin-homology domain (PH domain)/Phosphotyrosine-binding domain (PTB)"/>
    <property type="match status" value="1"/>
</dbReference>
<dbReference type="InterPro" id="IPR002110">
    <property type="entry name" value="Ankyrin_rpt"/>
</dbReference>
<dbReference type="InterPro" id="IPR036770">
    <property type="entry name" value="Ankyrin_rpt-contain_sf"/>
</dbReference>
<dbReference type="InterPro" id="IPR056485">
    <property type="entry name" value="ARM_KRIT1"/>
</dbReference>
<dbReference type="InterPro" id="IPR019749">
    <property type="entry name" value="Band_41_domain"/>
</dbReference>
<dbReference type="InterPro" id="IPR014352">
    <property type="entry name" value="FERM/acyl-CoA-bd_prot_sf"/>
</dbReference>
<dbReference type="InterPro" id="IPR035963">
    <property type="entry name" value="FERM_2"/>
</dbReference>
<dbReference type="InterPro" id="IPR019748">
    <property type="entry name" value="FERM_central"/>
</dbReference>
<dbReference type="InterPro" id="IPR000299">
    <property type="entry name" value="FERM_domain"/>
</dbReference>
<dbReference type="InterPro" id="IPR051594">
    <property type="entry name" value="KRIT1/FRMD8"/>
</dbReference>
<dbReference type="InterPro" id="IPR041791">
    <property type="entry name" value="KRIT1_FERM_C"/>
</dbReference>
<dbReference type="InterPro" id="IPR032022">
    <property type="entry name" value="NUDIX"/>
</dbReference>
<dbReference type="InterPro" id="IPR043058">
    <property type="entry name" value="NUDIX_sf"/>
</dbReference>
<dbReference type="InterPro" id="IPR011993">
    <property type="entry name" value="PH-like_dom_sf"/>
</dbReference>
<dbReference type="PANTHER" id="PTHR13283">
    <property type="entry name" value="KREV INTERACTION TRAPPED 1-RELATED"/>
    <property type="match status" value="1"/>
</dbReference>
<dbReference type="PANTHER" id="PTHR13283:SF11">
    <property type="entry name" value="KREV INTERACTION TRAPPED PROTEIN 1"/>
    <property type="match status" value="1"/>
</dbReference>
<dbReference type="Pfam" id="PF24521">
    <property type="entry name" value="Ank_KRIT1"/>
    <property type="match status" value="1"/>
</dbReference>
<dbReference type="Pfam" id="PF00373">
    <property type="entry name" value="FERM_M"/>
    <property type="match status" value="1"/>
</dbReference>
<dbReference type="Pfam" id="PF24522">
    <property type="entry name" value="KRIT1_FRMD8_FERM_C"/>
    <property type="match status" value="1"/>
</dbReference>
<dbReference type="Pfam" id="PF16705">
    <property type="entry name" value="NUDIX_5"/>
    <property type="match status" value="1"/>
</dbReference>
<dbReference type="SMART" id="SM00248">
    <property type="entry name" value="ANK"/>
    <property type="match status" value="3"/>
</dbReference>
<dbReference type="SMART" id="SM00295">
    <property type="entry name" value="B41"/>
    <property type="match status" value="1"/>
</dbReference>
<dbReference type="SUPFAM" id="SSF48403">
    <property type="entry name" value="Ankyrin repeat"/>
    <property type="match status" value="1"/>
</dbReference>
<dbReference type="SUPFAM" id="SSF47031">
    <property type="entry name" value="Second domain of FERM"/>
    <property type="match status" value="1"/>
</dbReference>
<dbReference type="PROSITE" id="PS50297">
    <property type="entry name" value="ANK_REP_REGION"/>
    <property type="match status" value="1"/>
</dbReference>
<dbReference type="PROSITE" id="PS50088">
    <property type="entry name" value="ANK_REPEAT"/>
    <property type="match status" value="2"/>
</dbReference>
<dbReference type="PROSITE" id="PS50057">
    <property type="entry name" value="FERM_3"/>
    <property type="match status" value="1"/>
</dbReference>
<sequence length="736" mass="83982">MGNPENIEDAYVAVIRPKNTASLNSREYRAKSYEILLHEVPIEGQKKKRKKVLLETKLQSNSEIAQGILDYVVETTKPISPANQGIKGKRVVLMRKFPLDGEKTGREAALFIVPSVVKDNTKYAYTPGCPIFYCLQDIMRVCSESSTHFATLTARMLIALDKWLDERHAQSHFIPALFRPSPLERIKTNVINPAYAAELGQVDNSLHMGYSALEIKSKMLALEKADTCIYNPLFGSDLQYTNRVDKVVINPYFGLGAPDYSKIQIPKQEKWQRSMSSVVEDKERQWVDDFPLHRNACEGDSELLSHLLDKGLSVNQLDNDHWAPIHYACWYGKVEATRILLEKGKCNPNLLNGQLSSPLHFAAGGGHAEIVQILLTHPDIDRHITDQQGRSPLNVCEENKQNNWEEAAKLLKDAINKPYEKVRIYRMDGSYRSVELKHGNNTTAQQIMEGMRLSQETQRYFTIWICSENLSLQFKPYHKPLQQVHDWPEILAELTNLDPQRETPQLFLRRDVGLPLEVEKKIEDPLAILILFDEARYNLLKGFYTAPDAKLITLASLLLQIVYGNYESKKHKQGFLNEETLKSIVPITKLKSKAPHWINRILHEYKNLSLSEGVSKEMHHLQRMFLQNCWEIPTYGAAFFTGQIFTKASPSNHKVIPVYVGVNIKGLHLLNMETKALLISLKYCCFTWQLGDAGTCFQIHSMENKMSFIVHTKQAGLVVKLLMKLNGQLMPSERNS</sequence>
<name>KRIT1_MOUSE</name>
<evidence type="ECO:0000250" key="1"/>
<evidence type="ECO:0000250" key="2">
    <source>
        <dbReference type="UniProtKB" id="O00522"/>
    </source>
</evidence>
<evidence type="ECO:0000255" key="3"/>
<evidence type="ECO:0000255" key="4">
    <source>
        <dbReference type="PROSITE-ProRule" id="PRU00084"/>
    </source>
</evidence>
<evidence type="ECO:0000269" key="5">
    <source>
    </source>
</evidence>
<evidence type="ECO:0000269" key="6">
    <source>
    </source>
</evidence>
<evidence type="ECO:0000269" key="7">
    <source>
    </source>
</evidence>
<evidence type="ECO:0000269" key="8">
    <source>
    </source>
</evidence>
<evidence type="ECO:0000269" key="9">
    <source>
    </source>
</evidence>
<evidence type="ECO:0000269" key="10">
    <source>
    </source>
</evidence>
<evidence type="ECO:0000269" key="11">
    <source>
    </source>
</evidence>
<evidence type="ECO:0000303" key="12">
    <source>
    </source>
</evidence>
<evidence type="ECO:0000303" key="13">
    <source>
    </source>
</evidence>
<evidence type="ECO:0000303" key="14">
    <source>
    </source>
</evidence>
<evidence type="ECO:0000305" key="15"/>
<comment type="function">
    <text evidence="2 8 9 10 11">Component of the CCM signaling pathway which is a crucial regulator of heart and vessel formation and integrity. Negative regulator of angiogenesis. Inhibits endothelial proliferation, apoptosis, migration, lumen formation and sprouting angiogenesis in primary endothelial cells. Promotes AKT phosphorylation in a NOTCH-dependent and independent manner, and inhibits ERK1/2 phosphorylation indirectly through activation of the DELTA-NOTCH cascade. Acts in concert with CDH5 to establish and maintain correct endothelial cell polarity and vascular lumen and these effects are mediated by recruitment and activation of the Par polarity complex and RAP1B. Required for the localization of phosphorylated PRKCZ, PARD3, TIAM1 and RAP1B to the cell junction, and cell junction stabilization. Plays a role in integrin signaling via its interaction with ITGB1BP1; this prevents the interaction between ITGB1 and ITGB1BP1. Microtubule-associated protein that binds to phosphatidylinositol 4,5-bisphosphate (PIP2)-containing membranes in a GTP-bound RAP1-dependent manner (By similarity). Plays an important role in the maintenance of the intracellular reactive oxygen species (ROS) homeostasis to prevent oxidative cellular damage. Regulates the homeostasis of intracellular ROS through an antioxidant pathway involving FOXO1 and SOD2. Facilitates the down-regulation of cyclin-D1 (CCND1) levels required for cell transition from proliferative growth to quiescence by preventing the accumulation of intracellular ROS through the modulation of FOXO1 and SOD2 levels. May play a role in the regulation of macroautophagy through the down-regulation of the mTOR pathway (PubMed:26417067).</text>
</comment>
<comment type="subunit">
    <text evidence="2 7">Found in a complex, at least composed of ITGB1BP1, KRIT1 and RAP1A. Interacts (via C-terminus FERM domain) with RAP1A (active GTP-bound form preferentially); the interaction does not induce the opening conformation of KRIT1. Interacts (via N-terminus NPXY motif) with ITGB1BP1; the interaction induces the opening conformation of KRIT1 and competes with ITGB1 for ITGB1BP1 interaction. Associates (via N-terminus and C-terminus regions) with microtubules; the interaction is inhibited in presence of ITGB1BP1 and active GTP-bound RAP1A. Interacts (via FERM domain) with RAP1B. Interacts with CDH5. Interacts with RAP1A (By similarity). Interacts with HEG1 and CCM2; greatly facilitates CCM2-binding to HEG1 (PubMed:19151727).</text>
</comment>
<comment type="subcellular location">
    <subcellularLocation>
        <location evidence="1">Cytoplasm</location>
        <location evidence="1">Cytoskeleton</location>
    </subcellularLocation>
    <subcellularLocation>
        <location evidence="1">Cell membrane</location>
        <topology evidence="1">Peripheral membrane protein</topology>
    </subcellularLocation>
    <subcellularLocation>
        <location evidence="1">Cell junction</location>
    </subcellularLocation>
    <text evidence="1">KRIT1 and CDH5 reciprocally regulate their localization to endothelial cell-cell junctions. Association with RAP1 relocalizes KRIT1 from microtubules to cell junction membranes. Translocates from the cytoplasm along microtubules to the cell membrane in an ITGB1BP1-dependent manner (By similarity).</text>
</comment>
<comment type="alternative products">
    <event type="alternative splicing"/>
    <isoform>
        <id>Q6S5J6-1</id>
        <name>1</name>
        <name>Krit1A</name>
        <sequence type="displayed"/>
    </isoform>
    <isoform>
        <id>Q6S5J6-2</id>
        <name>2</name>
        <name>Krit1B</name>
        <sequence type="described" ref="VSP_015803"/>
    </isoform>
    <isoform>
        <id>Q6S5J6-3</id>
        <name>3</name>
        <sequence type="described" ref="VSP_015801"/>
    </isoform>
    <isoform>
        <id>Q6S5J6-4</id>
        <name>4</name>
        <sequence type="described" ref="VSP_015802"/>
    </isoform>
</comment>
<comment type="tissue specificity">
    <text evidence="5 6">Expressed in heart, brain, spleen, lung, thymus, kidney and testis. Isoform 2 was more frequently expressed in the thymus than isoform 1.</text>
</comment>
<comment type="developmental stage">
    <text evidence="5">At stage 9.5 dpc ubiquitously expressed, at 12.5 dpc expressed in structures of the CNS, especially in zones of the proliferative active ventricular zones of the brain and in the spinal cord. Expression increased in organs that were in the state of organ expansion like lung and liver. At 17.5 dpc, expression was strongly reduced in endoderm-derived tissues. In early postnatal development, strongly expressed in regions of ossification.</text>
</comment>
<comment type="domain">
    <text evidence="2">The FERM domain mediates binding to RAP1A and RAP1B and is necessary for binding to phosphatidylinositol 4,5-bisphosphate (PIP2).</text>
</comment>
<comment type="domain">
    <text evidence="2">The N-terminal domain has structural similarity to the nudix hydrolase domain, despite the absence of a nudix box and low sequence similarity with nudix hydrolase domains. The N-terminus and the C-terminus part associate together via the NPAY binding motif and adopt a lose conformation that is disrupted by ITGB1BP1, but not by RAP1A.</text>
</comment>
<comment type="domain">
    <text evidence="2">Contains 4 ANK repeats that precede the FERM domain.</text>
</comment>
<protein>
    <recommendedName>
        <fullName>Krev interaction trapped protein 1</fullName>
        <shortName>Krev interaction trapped 1</shortName>
    </recommendedName>
    <alternativeName>
        <fullName>Cerebral cavernous malformations 1 protein homolog</fullName>
    </alternativeName>
</protein>
<organism>
    <name type="scientific">Mus musculus</name>
    <name type="common">Mouse</name>
    <dbReference type="NCBI Taxonomy" id="10090"/>
    <lineage>
        <taxon>Eukaryota</taxon>
        <taxon>Metazoa</taxon>
        <taxon>Chordata</taxon>
        <taxon>Craniata</taxon>
        <taxon>Vertebrata</taxon>
        <taxon>Euteleostomi</taxon>
        <taxon>Mammalia</taxon>
        <taxon>Eutheria</taxon>
        <taxon>Euarchontoglires</taxon>
        <taxon>Glires</taxon>
        <taxon>Rodentia</taxon>
        <taxon>Myomorpha</taxon>
        <taxon>Muroidea</taxon>
        <taxon>Muridae</taxon>
        <taxon>Murinae</taxon>
        <taxon>Mus</taxon>
        <taxon>Mus</taxon>
    </lineage>
</organism>
<proteinExistence type="evidence at protein level"/>
<reference key="1">
    <citation type="journal article" date="2000" name="Genomics">
        <title>Cloning of the murine Krit1 cDNA reveals novel mammalian 5' coding exons.</title>
        <authorList>
            <person name="Zhang J."/>
            <person name="Clatterbuck R.E."/>
            <person name="Rigamonti D."/>
            <person name="Dietz H.C."/>
        </authorList>
    </citation>
    <scope>NUCLEOTIDE SEQUENCE [MRNA] (ISOFORM 1)</scope>
    <source>
        <strain>MALK/c</strain>
    </source>
</reference>
<reference key="2">
    <citation type="journal article" date="2002" name="Acta Neuropathol.">
        <title>Mutation and expression analysis of the KRIT1 gene associated with cerebral cavernous malformations (CCM1).</title>
        <authorList>
            <person name="Kehrer-Sawatzki H."/>
            <person name="Wilda M."/>
            <person name="Braun V.M."/>
            <person name="Richter H.-P."/>
            <person name="Hameister H."/>
        </authorList>
    </citation>
    <scope>NUCLEOTIDE SEQUENCE [MRNA] (ISOFORM 3)</scope>
    <scope>TISSUE SPECIFICITY</scope>
    <scope>DEVELOPMENTAL STAGE</scope>
</reference>
<reference key="3">
    <citation type="journal article" date="2004" name="Gene">
        <title>Identification of Krit1B: a novel alternative splicing isoform of cerebral cavernous malformation gene-1.</title>
        <authorList>
            <person name="Retta S.F."/>
            <person name="Avolio M."/>
            <person name="Francalanci F."/>
            <person name="Procida S."/>
            <person name="Balzac F."/>
            <person name="Degani S."/>
            <person name="Tarone G."/>
            <person name="Silengo L."/>
        </authorList>
    </citation>
    <scope>NUCLEOTIDE SEQUENCE [MRNA] (ISOFORMS 1 AND 2)</scope>
    <scope>ALTERNATIVE SPLICING</scope>
    <scope>TISSUE SPECIFICITY</scope>
    <source>
        <strain>C57BL/6J</strain>
    </source>
</reference>
<reference key="4">
    <citation type="journal article" date="2004" name="Genome Res.">
        <title>The status, quality, and expansion of the NIH full-length cDNA project: the Mammalian Gene Collection (MGC).</title>
        <authorList>
            <consortium name="The MGC Project Team"/>
        </authorList>
    </citation>
    <scope>NUCLEOTIDE SEQUENCE [LARGE SCALE MRNA] (ISOFORM 1)</scope>
    <source>
        <tissue>Olfactory epithelium</tissue>
    </source>
</reference>
<reference key="5">
    <citation type="journal article" date="2005" name="Science">
        <title>The transcriptional landscape of the mammalian genome.</title>
        <authorList>
            <person name="Carninci P."/>
            <person name="Kasukawa T."/>
            <person name="Katayama S."/>
            <person name="Gough J."/>
            <person name="Frith M.C."/>
            <person name="Maeda N."/>
            <person name="Oyama R."/>
            <person name="Ravasi T."/>
            <person name="Lenhard B."/>
            <person name="Wells C."/>
            <person name="Kodzius R."/>
            <person name="Shimokawa K."/>
            <person name="Bajic V.B."/>
            <person name="Brenner S.E."/>
            <person name="Batalov S."/>
            <person name="Forrest A.R."/>
            <person name="Zavolan M."/>
            <person name="Davis M.J."/>
            <person name="Wilming L.G."/>
            <person name="Aidinis V."/>
            <person name="Allen J.E."/>
            <person name="Ambesi-Impiombato A."/>
            <person name="Apweiler R."/>
            <person name="Aturaliya R.N."/>
            <person name="Bailey T.L."/>
            <person name="Bansal M."/>
            <person name="Baxter L."/>
            <person name="Beisel K.W."/>
            <person name="Bersano T."/>
            <person name="Bono H."/>
            <person name="Chalk A.M."/>
            <person name="Chiu K.P."/>
            <person name="Choudhary V."/>
            <person name="Christoffels A."/>
            <person name="Clutterbuck D.R."/>
            <person name="Crowe M.L."/>
            <person name="Dalla E."/>
            <person name="Dalrymple B.P."/>
            <person name="de Bono B."/>
            <person name="Della Gatta G."/>
            <person name="di Bernardo D."/>
            <person name="Down T."/>
            <person name="Engstrom P."/>
            <person name="Fagiolini M."/>
            <person name="Faulkner G."/>
            <person name="Fletcher C.F."/>
            <person name="Fukushima T."/>
            <person name="Furuno M."/>
            <person name="Futaki S."/>
            <person name="Gariboldi M."/>
            <person name="Georgii-Hemming P."/>
            <person name="Gingeras T.R."/>
            <person name="Gojobori T."/>
            <person name="Green R.E."/>
            <person name="Gustincich S."/>
            <person name="Harbers M."/>
            <person name="Hayashi Y."/>
            <person name="Hensch T.K."/>
            <person name="Hirokawa N."/>
            <person name="Hill D."/>
            <person name="Huminiecki L."/>
            <person name="Iacono M."/>
            <person name="Ikeo K."/>
            <person name="Iwama A."/>
            <person name="Ishikawa T."/>
            <person name="Jakt M."/>
            <person name="Kanapin A."/>
            <person name="Katoh M."/>
            <person name="Kawasawa Y."/>
            <person name="Kelso J."/>
            <person name="Kitamura H."/>
            <person name="Kitano H."/>
            <person name="Kollias G."/>
            <person name="Krishnan S.P."/>
            <person name="Kruger A."/>
            <person name="Kummerfeld S.K."/>
            <person name="Kurochkin I.V."/>
            <person name="Lareau L.F."/>
            <person name="Lazarevic D."/>
            <person name="Lipovich L."/>
            <person name="Liu J."/>
            <person name="Liuni S."/>
            <person name="McWilliam S."/>
            <person name="Madan Babu M."/>
            <person name="Madera M."/>
            <person name="Marchionni L."/>
            <person name="Matsuda H."/>
            <person name="Matsuzawa S."/>
            <person name="Miki H."/>
            <person name="Mignone F."/>
            <person name="Miyake S."/>
            <person name="Morris K."/>
            <person name="Mottagui-Tabar S."/>
            <person name="Mulder N."/>
            <person name="Nakano N."/>
            <person name="Nakauchi H."/>
            <person name="Ng P."/>
            <person name="Nilsson R."/>
            <person name="Nishiguchi S."/>
            <person name="Nishikawa S."/>
            <person name="Nori F."/>
            <person name="Ohara O."/>
            <person name="Okazaki Y."/>
            <person name="Orlando V."/>
            <person name="Pang K.C."/>
            <person name="Pavan W.J."/>
            <person name="Pavesi G."/>
            <person name="Pesole G."/>
            <person name="Petrovsky N."/>
            <person name="Piazza S."/>
            <person name="Reed J."/>
            <person name="Reid J.F."/>
            <person name="Ring B.Z."/>
            <person name="Ringwald M."/>
            <person name="Rost B."/>
            <person name="Ruan Y."/>
            <person name="Salzberg S.L."/>
            <person name="Sandelin A."/>
            <person name="Schneider C."/>
            <person name="Schoenbach C."/>
            <person name="Sekiguchi K."/>
            <person name="Semple C.A."/>
            <person name="Seno S."/>
            <person name="Sessa L."/>
            <person name="Sheng Y."/>
            <person name="Shibata Y."/>
            <person name="Shimada H."/>
            <person name="Shimada K."/>
            <person name="Silva D."/>
            <person name="Sinclair B."/>
            <person name="Sperling S."/>
            <person name="Stupka E."/>
            <person name="Sugiura K."/>
            <person name="Sultana R."/>
            <person name="Takenaka Y."/>
            <person name="Taki K."/>
            <person name="Tammoja K."/>
            <person name="Tan S.L."/>
            <person name="Tang S."/>
            <person name="Taylor M.S."/>
            <person name="Tegner J."/>
            <person name="Teichmann S.A."/>
            <person name="Ueda H.R."/>
            <person name="van Nimwegen E."/>
            <person name="Verardo R."/>
            <person name="Wei C.L."/>
            <person name="Yagi K."/>
            <person name="Yamanishi H."/>
            <person name="Zabarovsky E."/>
            <person name="Zhu S."/>
            <person name="Zimmer A."/>
            <person name="Hide W."/>
            <person name="Bult C."/>
            <person name="Grimmond S.M."/>
            <person name="Teasdale R.D."/>
            <person name="Liu E.T."/>
            <person name="Brusic V."/>
            <person name="Quackenbush J."/>
            <person name="Wahlestedt C."/>
            <person name="Mattick J.S."/>
            <person name="Hume D.A."/>
            <person name="Kai C."/>
            <person name="Sasaki D."/>
            <person name="Tomaru Y."/>
            <person name="Fukuda S."/>
            <person name="Kanamori-Katayama M."/>
            <person name="Suzuki M."/>
            <person name="Aoki J."/>
            <person name="Arakawa T."/>
            <person name="Iida J."/>
            <person name="Imamura K."/>
            <person name="Itoh M."/>
            <person name="Kato T."/>
            <person name="Kawaji H."/>
            <person name="Kawagashira N."/>
            <person name="Kawashima T."/>
            <person name="Kojima M."/>
            <person name="Kondo S."/>
            <person name="Konno H."/>
            <person name="Nakano K."/>
            <person name="Ninomiya N."/>
            <person name="Nishio T."/>
            <person name="Okada M."/>
            <person name="Plessy C."/>
            <person name="Shibata K."/>
            <person name="Shiraki T."/>
            <person name="Suzuki S."/>
            <person name="Tagami M."/>
            <person name="Waki K."/>
            <person name="Watahiki A."/>
            <person name="Okamura-Oho Y."/>
            <person name="Suzuki H."/>
            <person name="Kawai J."/>
            <person name="Hayashizaki Y."/>
        </authorList>
    </citation>
    <scope>NUCLEOTIDE SEQUENCE [LARGE SCALE MRNA] OF 517-736 (ISOFORM 2)</scope>
    <source>
        <strain>C57BL/6J</strain>
        <tissue>Thymus</tissue>
    </source>
</reference>
<reference key="6">
    <citation type="journal article" date="2009" name="Nat. Med.">
        <title>Regulation of cardiovascular development and integrity by the heart of glass-cerebral cavernous malformation protein pathway.</title>
        <authorList>
            <person name="Kleaveland B."/>
            <person name="Zheng X."/>
            <person name="Liu J.J."/>
            <person name="Blum Y."/>
            <person name="Tung J.J."/>
            <person name="Zou Z."/>
            <person name="Sweeney S.M."/>
            <person name="Chen M."/>
            <person name="Guo L."/>
            <person name="Lu M.M."/>
            <person name="Zhou D."/>
            <person name="Kitajewski J."/>
            <person name="Affolter M."/>
            <person name="Ginsberg M.H."/>
            <person name="Kahn M.L."/>
        </authorList>
    </citation>
    <scope>INTERACTION WITH HEG1 AND CCM2</scope>
</reference>
<reference key="7">
    <citation type="journal article" date="2010" name="J. Cell Sci.">
        <title>CCM1 regulates vascular-lumen organization by inducing endothelial polarity.</title>
        <authorList>
            <person name="Lampugnani M.G."/>
            <person name="Orsenigo F."/>
            <person name="Rudini N."/>
            <person name="Maddaluno L."/>
            <person name="Boulday G."/>
            <person name="Chapon F."/>
            <person name="Dejana E."/>
        </authorList>
    </citation>
    <scope>FUNCTION</scope>
</reference>
<reference key="8">
    <citation type="journal article" date="2010" name="PLoS ONE">
        <title>KRIT1 regulates the homeostasis of intracellular reactive oxygen species.</title>
        <authorList>
            <person name="Goitre L."/>
            <person name="Balzac F."/>
            <person name="Degani S."/>
            <person name="Degan P."/>
            <person name="Marchi S."/>
            <person name="Pinton P."/>
            <person name="Retta S.F."/>
        </authorList>
    </citation>
    <scope>FUNCTION</scope>
</reference>
<reference key="9">
    <citation type="journal article" date="2010" name="Proc. Natl. Acad. Sci. U.S.A.">
        <title>Cerebral cavernous malformation protein CCM1 inhibits sprouting angiogenesis by activating DELTA-NOTCH signaling.</title>
        <authorList>
            <person name="Wuestehube J."/>
            <person name="Bartol A."/>
            <person name="Liebler S.S."/>
            <person name="Bruetsch R."/>
            <person name="Zhu Y."/>
            <person name="Felbor U."/>
            <person name="Sure U."/>
            <person name="Augustin H.G."/>
            <person name="Fischer A."/>
        </authorList>
    </citation>
    <scope>FUNCTION</scope>
</reference>
<reference key="10">
    <citation type="journal article" date="2015" name="EMBO Mol. Med.">
        <title>Defective autophagy is a key feature of cerebral cavernous malformations.</title>
        <authorList>
            <person name="Marchi S."/>
            <person name="Corricelli M."/>
            <person name="Trapani E."/>
            <person name="Bravi L."/>
            <person name="Pittaro A."/>
            <person name="Delle Monache S."/>
            <person name="Ferroni L."/>
            <person name="Patergnani S."/>
            <person name="Missiroli S."/>
            <person name="Goitre L."/>
            <person name="Trabalzini L."/>
            <person name="Rimessi A."/>
            <person name="Giorgi C."/>
            <person name="Zavan B."/>
            <person name="Cassoni P."/>
            <person name="Dejana E."/>
            <person name="Retta S.F."/>
            <person name="Pinton P."/>
        </authorList>
    </citation>
    <scope>FUNCTION</scope>
</reference>
<accession>Q6S5J6</accession>
<accession>Q6VSV2</accession>
<accession>Q7TPR8</accession>
<accession>Q8C9Q6</accession>
<accession>Q9EPY2</accession>
<accession>Q9ERH0</accession>
<feature type="chain" id="PRO_0000067024" description="Krev interaction trapped protein 1">
    <location>
        <begin position="1"/>
        <end position="736"/>
    </location>
</feature>
<feature type="repeat" description="ANK 1" evidence="3">
    <location>
        <begin position="287"/>
        <end position="316"/>
    </location>
</feature>
<feature type="repeat" description="ANK 2" evidence="3">
    <location>
        <begin position="320"/>
        <end position="350"/>
    </location>
</feature>
<feature type="repeat" description="ANK 3" evidence="3">
    <location>
        <begin position="354"/>
        <end position="384"/>
    </location>
</feature>
<feature type="repeat" description="ANK 4" evidence="3">
    <location>
        <begin position="388"/>
        <end position="419"/>
    </location>
</feature>
<feature type="domain" description="FERM" evidence="4">
    <location>
        <begin position="420"/>
        <end position="736"/>
    </location>
</feature>
<feature type="region of interest" description="N-terminal domain similar to Nudix hydrolase domain" evidence="1">
    <location>
        <begin position="1"/>
        <end position="170"/>
    </location>
</feature>
<feature type="region of interest" description="Interaction with ITGB1BP1" evidence="1">
    <location>
        <begin position="172"/>
        <end position="195"/>
    </location>
</feature>
<feature type="region of interest" description="Interaction with RAP1B" evidence="1">
    <location>
        <begin position="430"/>
        <end position="452"/>
    </location>
</feature>
<feature type="splice variant" id="VSP_015801" description="In isoform 3." evidence="12">
    <location>
        <begin position="295"/>
        <end position="300"/>
    </location>
</feature>
<feature type="splice variant" id="VSP_015802" description="In isoform 4." evidence="15">
    <location>
        <begin position="330"/>
        <end position="736"/>
    </location>
</feature>
<feature type="splice variant" id="VSP_015803" description="In isoform 2." evidence="13 14">
    <location>
        <begin position="676"/>
        <end position="714"/>
    </location>
</feature>
<feature type="sequence conflict" description="In Ref. 2; AAG18456." evidence="15" ref="2">
    <original>K</original>
    <variation>E</variation>
    <location>
        <position position="47"/>
    </location>
</feature>
<feature type="sequence conflict" description="In Ref. 2; AAG18456." evidence="15" ref="2">
    <original>N</original>
    <variation>D</variation>
    <location>
        <position position="319"/>
    </location>
</feature>
<feature type="sequence conflict" description="In Ref. 1; AAG47775." evidence="15" ref="1">
    <original>P</original>
    <variation>R</variation>
    <location>
        <position position="515"/>
    </location>
</feature>
<feature type="sequence conflict" description="In Ref. 1; AAG47775." evidence="15" ref="1">
    <original>KLI</original>
    <variation>RLD</variation>
    <location>
        <begin position="550"/>
        <end position="552"/>
    </location>
</feature>
<feature type="sequence conflict" description="In Ref. 1; AAG47775." evidence="15" ref="1">
    <original>K</original>
    <variation>R</variation>
    <location>
        <position position="665"/>
    </location>
</feature>
<feature type="sequence conflict" description="In Ref. 1; AAG47775." evidence="15" ref="1">
    <original>CCFTWQ</original>
    <variation>WLLTWA</variation>
    <location>
        <begin position="684"/>
        <end position="689"/>
    </location>
</feature>
<keyword id="KW-0025">Alternative splicing</keyword>
<keyword id="KW-0037">Angiogenesis</keyword>
<keyword id="KW-0040">ANK repeat</keyword>
<keyword id="KW-0965">Cell junction</keyword>
<keyword id="KW-1003">Cell membrane</keyword>
<keyword id="KW-0963">Cytoplasm</keyword>
<keyword id="KW-0206">Cytoskeleton</keyword>
<keyword id="KW-0472">Membrane</keyword>
<keyword id="KW-1185">Reference proteome</keyword>
<keyword id="KW-0677">Repeat</keyword>